<proteinExistence type="inferred from homology"/>
<dbReference type="EMBL" id="AE017262">
    <property type="protein sequence ID" value="AAT03345.1"/>
    <property type="molecule type" value="Genomic_DNA"/>
</dbReference>
<dbReference type="RefSeq" id="WP_003721328.1">
    <property type="nucleotide sequence ID" value="NC_002973.6"/>
</dbReference>
<dbReference type="SMR" id="Q723B6"/>
<dbReference type="KEGG" id="lmf:LMOf2365_0563"/>
<dbReference type="HOGENOM" id="CLU_048704_0_0_9"/>
<dbReference type="CDD" id="cd08025">
    <property type="entry name" value="RNR_PFL_like_DUF711"/>
    <property type="match status" value="1"/>
</dbReference>
<dbReference type="Gene3D" id="3.20.70.20">
    <property type="match status" value="1"/>
</dbReference>
<dbReference type="HAMAP" id="MF_01221">
    <property type="entry name" value="UPF0210"/>
    <property type="match status" value="1"/>
</dbReference>
<dbReference type="InterPro" id="IPR007841">
    <property type="entry name" value="UPF0210"/>
</dbReference>
<dbReference type="NCBIfam" id="NF003700">
    <property type="entry name" value="PRK05313.1"/>
    <property type="match status" value="1"/>
</dbReference>
<dbReference type="PANTHER" id="PTHR37560:SF1">
    <property type="entry name" value="UPF0210 PROTEIN MJ1665"/>
    <property type="match status" value="1"/>
</dbReference>
<dbReference type="PANTHER" id="PTHR37560">
    <property type="entry name" value="UPF0210 PROTEIN SPR0218"/>
    <property type="match status" value="1"/>
</dbReference>
<dbReference type="Pfam" id="PF05167">
    <property type="entry name" value="DUF711"/>
    <property type="match status" value="1"/>
</dbReference>
<dbReference type="SUPFAM" id="SSF51998">
    <property type="entry name" value="PFL-like glycyl radical enzymes"/>
    <property type="match status" value="1"/>
</dbReference>
<feature type="chain" id="PRO_0000070557" description="UPF0210 protein LMOf2365_0563">
    <location>
        <begin position="1"/>
        <end position="451"/>
    </location>
</feature>
<comment type="subunit">
    <text evidence="1">Homodimer.</text>
</comment>
<comment type="similarity">
    <text evidence="1">Belongs to the UPF0210 family.</text>
</comment>
<sequence>METNQILETIRMIEEEKLDIRTITMGISLLDCMDGDGEVARKKIYQKIVTKARNLVAVGEAIESEFGIPIINKRISVTPIAIIAGSSADTDYVEFAKTLDAAAKEVGVNFIGGYSALVQKGYTKGDEILIRSIPQALAQTERVCSSVNVGSTRTGINMDAVRQMGEVIKETADLTADTQGLGCAKLVVFANAVEDNPFMAGAFHGVGEADCVINVGVSGPGVVKRAIEKVKGEPFDIVAETVKQTAFKITRMGQLVGQVASEKLGVPFGIVDLSLAPTPAIGDSVAHILEEMGLEMVGTHGTTAALALLNDAVKKGGVMACGHVGGLSGAFIPVSEDAGMIEAVQQGALNLEKLEAMTAICSVGLDMIAVPGDTTAETLAAMIADEAAIGVINNKTTAVRVIPASGTKVGDMVEFGGLLGTAPVMPVNGKSSVDFIARGGRIPAPIHSFKN</sequence>
<protein>
    <recommendedName>
        <fullName evidence="1">UPF0210 protein LMOf2365_0563</fullName>
    </recommendedName>
</protein>
<organism>
    <name type="scientific">Listeria monocytogenes serotype 4b (strain F2365)</name>
    <dbReference type="NCBI Taxonomy" id="265669"/>
    <lineage>
        <taxon>Bacteria</taxon>
        <taxon>Bacillati</taxon>
        <taxon>Bacillota</taxon>
        <taxon>Bacilli</taxon>
        <taxon>Bacillales</taxon>
        <taxon>Listeriaceae</taxon>
        <taxon>Listeria</taxon>
    </lineage>
</organism>
<gene>
    <name type="ordered locus">LMOf2365_0563</name>
</gene>
<accession>Q723B6</accession>
<reference key="1">
    <citation type="journal article" date="2004" name="Nucleic Acids Res.">
        <title>Whole genome comparisons of serotype 4b and 1/2a strains of the food-borne pathogen Listeria monocytogenes reveal new insights into the core genome components of this species.</title>
        <authorList>
            <person name="Nelson K.E."/>
            <person name="Fouts D.E."/>
            <person name="Mongodin E.F."/>
            <person name="Ravel J."/>
            <person name="DeBoy R.T."/>
            <person name="Kolonay J.F."/>
            <person name="Rasko D.A."/>
            <person name="Angiuoli S.V."/>
            <person name="Gill S.R."/>
            <person name="Paulsen I.T."/>
            <person name="Peterson J.D."/>
            <person name="White O."/>
            <person name="Nelson W.C."/>
            <person name="Nierman W.C."/>
            <person name="Beanan M.J."/>
            <person name="Brinkac L.M."/>
            <person name="Daugherty S.C."/>
            <person name="Dodson R.J."/>
            <person name="Durkin A.S."/>
            <person name="Madupu R."/>
            <person name="Haft D.H."/>
            <person name="Selengut J."/>
            <person name="Van Aken S.E."/>
            <person name="Khouri H.M."/>
            <person name="Fedorova N."/>
            <person name="Forberger H.A."/>
            <person name="Tran B."/>
            <person name="Kathariou S."/>
            <person name="Wonderling L.D."/>
            <person name="Uhlich G.A."/>
            <person name="Bayles D.O."/>
            <person name="Luchansky J.B."/>
            <person name="Fraser C.M."/>
        </authorList>
    </citation>
    <scope>NUCLEOTIDE SEQUENCE [LARGE SCALE GENOMIC DNA]</scope>
    <source>
        <strain>F2365</strain>
    </source>
</reference>
<name>Y563_LISMF</name>
<evidence type="ECO:0000255" key="1">
    <source>
        <dbReference type="HAMAP-Rule" id="MF_01221"/>
    </source>
</evidence>